<reference evidence="5" key="1">
    <citation type="journal article" date="1998" name="Nature">
        <title>Deciphering the biology of Mycobacterium tuberculosis from the complete genome sequence.</title>
        <authorList>
            <person name="Cole S.T."/>
            <person name="Brosch R."/>
            <person name="Parkhill J."/>
            <person name="Garnier T."/>
            <person name="Churcher C.M."/>
            <person name="Harris D.E."/>
            <person name="Gordon S.V."/>
            <person name="Eiglmeier K."/>
            <person name="Gas S."/>
            <person name="Barry C.E. III"/>
            <person name="Tekaia F."/>
            <person name="Badcock K."/>
            <person name="Basham D."/>
            <person name="Brown D."/>
            <person name="Chillingworth T."/>
            <person name="Connor R."/>
            <person name="Davies R.M."/>
            <person name="Devlin K."/>
            <person name="Feltwell T."/>
            <person name="Gentles S."/>
            <person name="Hamlin N."/>
            <person name="Holroyd S."/>
            <person name="Hornsby T."/>
            <person name="Jagels K."/>
            <person name="Krogh A."/>
            <person name="McLean J."/>
            <person name="Moule S."/>
            <person name="Murphy L.D."/>
            <person name="Oliver S."/>
            <person name="Osborne J."/>
            <person name="Quail M.A."/>
            <person name="Rajandream M.A."/>
            <person name="Rogers J."/>
            <person name="Rutter S."/>
            <person name="Seeger K."/>
            <person name="Skelton S."/>
            <person name="Squares S."/>
            <person name="Squares R."/>
            <person name="Sulston J.E."/>
            <person name="Taylor K."/>
            <person name="Whitehead S."/>
            <person name="Barrell B.G."/>
        </authorList>
    </citation>
    <scope>NUCLEOTIDE SEQUENCE [LARGE SCALE GENOMIC DNA]</scope>
    <source>
        <strain>ATCC 25618 / H37Rv</strain>
    </source>
</reference>
<reference key="2">
    <citation type="journal article" date="2022" name="Microbiol. Spectr.">
        <title>A tRNA-Acetylating Toxin and Detoxifying Enzyme in Mycobacterium tuberculosis.</title>
        <authorList>
            <person name="Tomasi F.G."/>
            <person name="Hall A.M.J."/>
            <person name="Schweber J.T.P."/>
            <person name="Dulberger C.L."/>
            <person name="McGowen K."/>
            <person name="Liu Q."/>
            <person name="Fortune S.M."/>
            <person name="Helaine S."/>
            <person name="Rubin E.J."/>
        </authorList>
    </citation>
    <scope>FUNCTION</scope>
    <scope>DISRUPTION PHENOTYPE</scope>
    <scope>OPERON STRUCTURE</scope>
    <source>
        <strain>ATCC 25618 / H37Rv</strain>
    </source>
</reference>
<accession>O05910</accession>
<accession>F2GIF1</accession>
<accession>I6XWK2</accession>
<protein>
    <recommendedName>
        <fullName evidence="3">Antitoxin TacA</fullName>
    </recommendedName>
</protein>
<keyword id="KW-0238">DNA-binding</keyword>
<keyword id="KW-1185">Reference proteome</keyword>
<keyword id="KW-0678">Repressor</keyword>
<keyword id="KW-1277">Toxin-antitoxin system</keyword>
<keyword id="KW-0804">Transcription</keyword>
<keyword id="KW-0805">Transcription regulation</keyword>
<proteinExistence type="evidence at transcript level"/>
<gene>
    <name evidence="3" type="primary">tacA</name>
    <name evidence="5" type="ordered locus">Rv0918</name>
</gene>
<feature type="chain" id="PRO_0000461693" description="Antitoxin TacA">
    <location>
        <begin position="1"/>
        <end position="158"/>
    </location>
</feature>
<sequence>MHRAGAAVTANVWCRAGGIRMAPRPVIPVATQQRLRRQADRQSLGSSGLPALNCTPIRHTIDVMATKPERKTERLAARLTPEQDALIRRAAEAEGTDLTNFTVTAALAHARDVLADRRLFVLTDAAWTEFLAALDRPVSHKPRLEKLFAARSIFDTEG</sequence>
<name>TACA_MYCTU</name>
<evidence type="ECO:0000250" key="1">
    <source>
        <dbReference type="UniProtKB" id="A0A0F6B5X3"/>
    </source>
</evidence>
<evidence type="ECO:0000269" key="2">
    <source>
    </source>
</evidence>
<evidence type="ECO:0000303" key="3">
    <source>
    </source>
</evidence>
<evidence type="ECO:0000305" key="4"/>
<evidence type="ECO:0000312" key="5">
    <source>
        <dbReference type="EMBL" id="CCP43666.1"/>
    </source>
</evidence>
<dbReference type="EMBL" id="AL123456">
    <property type="protein sequence ID" value="CCP43666.1"/>
    <property type="molecule type" value="Genomic_DNA"/>
</dbReference>
<dbReference type="RefSeq" id="NP_215433.1">
    <property type="nucleotide sequence ID" value="NC_000962.3"/>
</dbReference>
<dbReference type="RefSeq" id="WP_003898647.1">
    <property type="nucleotide sequence ID" value="NZ_NVQJ01000001.1"/>
</dbReference>
<dbReference type="SMR" id="O05910"/>
<dbReference type="STRING" id="83332.Rv0918"/>
<dbReference type="PaxDb" id="83332-Rv0918"/>
<dbReference type="GeneID" id="885198"/>
<dbReference type="KEGG" id="mtu:Rv0918"/>
<dbReference type="KEGG" id="mtv:RVBD_0918"/>
<dbReference type="PATRIC" id="fig|83332.111.peg.1018"/>
<dbReference type="TubercuList" id="Rv0918"/>
<dbReference type="eggNOG" id="COG4453">
    <property type="taxonomic scope" value="Bacteria"/>
</dbReference>
<dbReference type="InParanoid" id="O05910"/>
<dbReference type="OrthoDB" id="574265at2"/>
<dbReference type="PhylomeDB" id="O05910"/>
<dbReference type="Proteomes" id="UP000001584">
    <property type="component" value="Chromosome"/>
</dbReference>
<dbReference type="GO" id="GO:0003677">
    <property type="term" value="F:DNA binding"/>
    <property type="evidence" value="ECO:0007669"/>
    <property type="project" value="UniProtKB-KW"/>
</dbReference>
<dbReference type="GO" id="GO:0006355">
    <property type="term" value="P:regulation of DNA-templated transcription"/>
    <property type="evidence" value="ECO:0007669"/>
    <property type="project" value="InterPro"/>
</dbReference>
<dbReference type="Gene3D" id="1.20.5.780">
    <property type="entry name" value="Single helix bin"/>
    <property type="match status" value="1"/>
</dbReference>
<dbReference type="InterPro" id="IPR010985">
    <property type="entry name" value="Ribbon_hlx_hlx"/>
</dbReference>
<dbReference type="InterPro" id="IPR016547">
    <property type="entry name" value="TacA"/>
</dbReference>
<dbReference type="InterPro" id="IPR014795">
    <property type="entry name" value="TacA_1-like"/>
</dbReference>
<dbReference type="PANTHER" id="PTHR35401">
    <property type="entry name" value="COPG FAMILY HELIX-TURN-HELIX PROTEIN-RELATED-RELATED"/>
    <property type="match status" value="1"/>
</dbReference>
<dbReference type="PANTHER" id="PTHR35401:SF1">
    <property type="entry name" value="CYTOPLASMIC PROTEIN"/>
    <property type="match status" value="1"/>
</dbReference>
<dbReference type="Pfam" id="PF08681">
    <property type="entry name" value="TacA1"/>
    <property type="match status" value="1"/>
</dbReference>
<dbReference type="PIRSF" id="PIRSF009158">
    <property type="entry name" value="UCP009158"/>
    <property type="match status" value="1"/>
</dbReference>
<dbReference type="SUPFAM" id="SSF47598">
    <property type="entry name" value="Ribbon-helix-helix"/>
    <property type="match status" value="1"/>
</dbReference>
<organism>
    <name type="scientific">Mycobacterium tuberculosis (strain ATCC 25618 / H37Rv)</name>
    <dbReference type="NCBI Taxonomy" id="83332"/>
    <lineage>
        <taxon>Bacteria</taxon>
        <taxon>Bacillati</taxon>
        <taxon>Actinomycetota</taxon>
        <taxon>Actinomycetes</taxon>
        <taxon>Mycobacteriales</taxon>
        <taxon>Mycobacteriaceae</taxon>
        <taxon>Mycobacterium</taxon>
        <taxon>Mycobacterium tuberculosis complex</taxon>
    </lineage>
</organism>
<comment type="function">
    <text evidence="2">Antitoxin component of a type II toxin-antitoxin (TA) system. Counteracts the toxic effect of cognate toxin TacT.</text>
</comment>
<comment type="function">
    <text evidence="1">TacA-TacT both represses and derepresses expression of its own operon.</text>
</comment>
<comment type="subunit">
    <text evidence="1">Forms a complex with cognate toxin TacT.</text>
</comment>
<comment type="induction">
    <text evidence="2">Part of the probable tacA-tacT operon.</text>
</comment>
<comment type="disruption phenotype">
    <text evidence="2">The tacA-tacT operon is non-essential and can be deleted without an effect on growth in cell culture.</text>
</comment>
<comment type="similarity">
    <text evidence="4">Belongs to the TacA antitoxin family.</text>
</comment>